<sequence>MGIEVISILVGGGNNYMHLFYDDDAAFCVDASNPRILLKALGINFKKSIYDEKEIFSMGEDRKKRRELVYLFTTHKHLDHSAGIRCISEESPNTKTISGFSGDICKSGDKFRFKDVEIECFHTPCHTVDSFCFYVGEKYLATGDTLLFLGCGKFFGGTPGQMIKNIEEIKKRVNHDAVLLYGHDYSEQNIRFTEEFYHVPEEIKKKKFLKLAEEIKYNPFFNLKKVSIEGSEEEVMGKLRERKNKFSKE</sequence>
<comment type="function">
    <text evidence="1">Thiolesterase that catalyzes the hydrolysis of S-D-lactoyl-glutathione to form glutathione and D-lactic acid.</text>
</comment>
<comment type="catalytic activity">
    <reaction>
        <text>an S-(2-hydroxyacyl)glutathione + H2O = a 2-hydroxy carboxylate + glutathione + H(+)</text>
        <dbReference type="Rhea" id="RHEA:21864"/>
        <dbReference type="ChEBI" id="CHEBI:15377"/>
        <dbReference type="ChEBI" id="CHEBI:15378"/>
        <dbReference type="ChEBI" id="CHEBI:57925"/>
        <dbReference type="ChEBI" id="CHEBI:58896"/>
        <dbReference type="ChEBI" id="CHEBI:71261"/>
        <dbReference type="EC" id="3.1.2.6"/>
    </reaction>
</comment>
<comment type="cofactor">
    <cofactor evidence="2">
        <name>Zn(2+)</name>
        <dbReference type="ChEBI" id="CHEBI:29105"/>
    </cofactor>
    <text evidence="2">Binds 2 Zn(2+) ions per subunit.</text>
</comment>
<comment type="pathway">
    <text>Secondary metabolite metabolism; methylglyoxal degradation; (R)-lactate from methylglyoxal: step 2/2.</text>
</comment>
<comment type="subcellular location">
    <subcellularLocation>
        <location evidence="1">Cytoplasm</location>
    </subcellularLocation>
    <subcellularLocation>
        <location evidence="1">Nucleus</location>
    </subcellularLocation>
</comment>
<comment type="developmental stage">
    <text evidence="3">Expressed in late sporogonial stages.</text>
</comment>
<comment type="similarity">
    <text evidence="4">Belongs to the metallo-beta-lactamase superfamily. Glyoxalase II family.</text>
</comment>
<evidence type="ECO:0000250" key="1"/>
<evidence type="ECO:0000250" key="2">
    <source>
        <dbReference type="UniProtKB" id="Q16775"/>
    </source>
</evidence>
<evidence type="ECO:0000269" key="3">
    <source>
    </source>
</evidence>
<evidence type="ECO:0000305" key="4"/>
<name>GLO2_ENCCU</name>
<accession>Q8SSH0</accession>
<organism>
    <name type="scientific">Encephalitozoon cuniculi (strain GB-M1)</name>
    <name type="common">Microsporidian parasite</name>
    <dbReference type="NCBI Taxonomy" id="284813"/>
    <lineage>
        <taxon>Eukaryota</taxon>
        <taxon>Fungi</taxon>
        <taxon>Fungi incertae sedis</taxon>
        <taxon>Microsporidia</taxon>
        <taxon>Unikaryonidae</taxon>
        <taxon>Encephalitozoon</taxon>
    </lineage>
</organism>
<proteinExistence type="evidence at protein level"/>
<reference key="1">
    <citation type="journal article" date="2001" name="Nature">
        <title>Genome sequence and gene compaction of the eukaryote parasite Encephalitozoon cuniculi.</title>
        <authorList>
            <person name="Katinka M.D."/>
            <person name="Duprat S."/>
            <person name="Cornillot E."/>
            <person name="Metenier G."/>
            <person name="Thomarat F."/>
            <person name="Prensier G."/>
            <person name="Barbe V."/>
            <person name="Peyretaillade E."/>
            <person name="Brottier P."/>
            <person name="Wincker P."/>
            <person name="Delbac F."/>
            <person name="El Alaoui H."/>
            <person name="Peyret P."/>
            <person name="Saurin W."/>
            <person name="Gouy M."/>
            <person name="Weissenbach J."/>
            <person name="Vivares C.P."/>
        </authorList>
    </citation>
    <scope>NUCLEOTIDE SEQUENCE [LARGE SCALE GENOMIC DNA]</scope>
    <source>
        <strain>GB-M1</strain>
    </source>
</reference>
<reference key="2">
    <citation type="journal article" date="2009" name="BMC Genomics">
        <title>Identification of transcriptional signals in Encephalitozoon cuniculi widespread among Microsporidia phylum: support for accurate structural genome annotation.</title>
        <authorList>
            <person name="Peyretaillade E."/>
            <person name="Goncalves O."/>
            <person name="Terrat S."/>
            <person name="Dugat-Bony E."/>
            <person name="Wincker P."/>
            <person name="Cornman R.S."/>
            <person name="Evans J.D."/>
            <person name="Delbac F."/>
            <person name="Peyret P."/>
        </authorList>
    </citation>
    <scope>GENOME REANNOTATION</scope>
    <source>
        <strain>GB-M1</strain>
    </source>
</reference>
<reference key="3">
    <citation type="journal article" date="2006" name="Proteomics">
        <title>Proteomic analysis of the eukaryotic parasite Encephalitozoon cuniculi (microsporidia): a reference map for proteins expressed in late sporogonial stages.</title>
        <authorList>
            <person name="Brosson D."/>
            <person name="Kuhn L."/>
            <person name="Delbac F."/>
            <person name="Garin J."/>
            <person name="Vivares C.P."/>
            <person name="Texier C."/>
        </authorList>
    </citation>
    <scope>IDENTIFICATION BY MASS SPECTROMETRY [LARGE SCALE ANALYSIS]</scope>
    <scope>DEVELOPMENTAL STAGE</scope>
    <scope>SUBCELLULAR LOCATION</scope>
</reference>
<gene>
    <name type="ordered locus">ECU02_0580</name>
</gene>
<protein>
    <recommendedName>
        <fullName>Probable hydroxyacylglutathione hydrolase ECU02_0580</fullName>
        <ecNumber>3.1.2.6</ecNumber>
    </recommendedName>
    <alternativeName>
        <fullName>Glyoxalase II</fullName>
        <shortName>Glx II</shortName>
    </alternativeName>
</protein>
<feature type="chain" id="PRO_0000383114" description="Probable hydroxyacylglutathione hydrolase ECU02_0580">
    <location>
        <begin position="1"/>
        <end position="249"/>
    </location>
</feature>
<feature type="binding site" evidence="2">
    <location>
        <position position="75"/>
    </location>
    <ligand>
        <name>Zn(2+)</name>
        <dbReference type="ChEBI" id="CHEBI:29105"/>
        <label>1</label>
    </ligand>
</feature>
<feature type="binding site" evidence="2">
    <location>
        <position position="77"/>
    </location>
    <ligand>
        <name>Zn(2+)</name>
        <dbReference type="ChEBI" id="CHEBI:29105"/>
        <label>1</label>
    </ligand>
</feature>
<feature type="binding site" evidence="2">
    <location>
        <position position="79"/>
    </location>
    <ligand>
        <name>Zn(2+)</name>
        <dbReference type="ChEBI" id="CHEBI:29105"/>
        <label>2</label>
    </ligand>
</feature>
<feature type="binding site" evidence="2">
    <location>
        <position position="80"/>
    </location>
    <ligand>
        <name>Zn(2+)</name>
        <dbReference type="ChEBI" id="CHEBI:29105"/>
        <label>2</label>
    </ligand>
</feature>
<feature type="binding site" evidence="2">
    <location>
        <position position="126"/>
    </location>
    <ligand>
        <name>Zn(2+)</name>
        <dbReference type="ChEBI" id="CHEBI:29105"/>
        <label>1</label>
    </ligand>
</feature>
<feature type="binding site" evidence="2">
    <location>
        <position position="144"/>
    </location>
    <ligand>
        <name>Zn(2+)</name>
        <dbReference type="ChEBI" id="CHEBI:29105"/>
        <label>1</label>
    </ligand>
</feature>
<feature type="binding site" evidence="2">
    <location>
        <position position="144"/>
    </location>
    <ligand>
        <name>Zn(2+)</name>
        <dbReference type="ChEBI" id="CHEBI:29105"/>
        <label>2</label>
    </ligand>
</feature>
<feature type="binding site" evidence="2">
    <location>
        <begin position="183"/>
        <end position="185"/>
    </location>
    <ligand>
        <name>substrate</name>
    </ligand>
</feature>
<feature type="binding site" evidence="2">
    <location>
        <position position="183"/>
    </location>
    <ligand>
        <name>Zn(2+)</name>
        <dbReference type="ChEBI" id="CHEBI:29105"/>
        <label>2</label>
    </ligand>
</feature>
<feature type="binding site" evidence="2">
    <location>
        <begin position="240"/>
        <end position="243"/>
    </location>
    <ligand>
        <name>substrate</name>
    </ligand>
</feature>
<dbReference type="EC" id="3.1.2.6"/>
<dbReference type="EMBL" id="AL590442">
    <property type="protein sequence ID" value="CAD25089.2"/>
    <property type="molecule type" value="Genomic_DNA"/>
</dbReference>
<dbReference type="RefSeq" id="NP_584585.2">
    <property type="nucleotide sequence ID" value="NM_001040774.2"/>
</dbReference>
<dbReference type="SMR" id="Q8SSH0"/>
<dbReference type="FunCoup" id="Q8SSH0">
    <property type="interactions" value="37"/>
</dbReference>
<dbReference type="STRING" id="284813.Q8SSH0"/>
<dbReference type="GeneID" id="858575"/>
<dbReference type="KEGG" id="ecu:ECU02_0580"/>
<dbReference type="VEuPathDB" id="MicrosporidiaDB:ECU02_0580"/>
<dbReference type="HOGENOM" id="CLU_030571_4_5_1"/>
<dbReference type="InParanoid" id="Q8SSH0"/>
<dbReference type="OrthoDB" id="515692at2759"/>
<dbReference type="UniPathway" id="UPA00619">
    <property type="reaction ID" value="UER00676"/>
</dbReference>
<dbReference type="Proteomes" id="UP000000819">
    <property type="component" value="Chromosome II"/>
</dbReference>
<dbReference type="GO" id="GO:0005737">
    <property type="term" value="C:cytoplasm"/>
    <property type="evidence" value="ECO:0007669"/>
    <property type="project" value="UniProtKB-SubCell"/>
</dbReference>
<dbReference type="GO" id="GO:0005634">
    <property type="term" value="C:nucleus"/>
    <property type="evidence" value="ECO:0007669"/>
    <property type="project" value="UniProtKB-SubCell"/>
</dbReference>
<dbReference type="GO" id="GO:0004416">
    <property type="term" value="F:hydroxyacylglutathione hydrolase activity"/>
    <property type="evidence" value="ECO:0007669"/>
    <property type="project" value="UniProtKB-EC"/>
</dbReference>
<dbReference type="GO" id="GO:0046872">
    <property type="term" value="F:metal ion binding"/>
    <property type="evidence" value="ECO:0007669"/>
    <property type="project" value="UniProtKB-KW"/>
</dbReference>
<dbReference type="CDD" id="cd07723">
    <property type="entry name" value="hydroxyacylglutathione_hydrolase_MBL-fold"/>
    <property type="match status" value="1"/>
</dbReference>
<dbReference type="Gene3D" id="3.60.15.10">
    <property type="entry name" value="Ribonuclease Z/Hydroxyacylglutathione hydrolase-like"/>
    <property type="match status" value="1"/>
</dbReference>
<dbReference type="InterPro" id="IPR035680">
    <property type="entry name" value="Clx_II_MBL"/>
</dbReference>
<dbReference type="InterPro" id="IPR001279">
    <property type="entry name" value="Metallo-B-lactamas"/>
</dbReference>
<dbReference type="InterPro" id="IPR036866">
    <property type="entry name" value="RibonucZ/Hydroxyglut_hydro"/>
</dbReference>
<dbReference type="PANTHER" id="PTHR11935">
    <property type="entry name" value="BETA LACTAMASE DOMAIN"/>
    <property type="match status" value="1"/>
</dbReference>
<dbReference type="PANTHER" id="PTHR11935:SF94">
    <property type="entry name" value="TENZING NORGAY, ISOFORM C"/>
    <property type="match status" value="1"/>
</dbReference>
<dbReference type="SMART" id="SM00849">
    <property type="entry name" value="Lactamase_B"/>
    <property type="match status" value="1"/>
</dbReference>
<dbReference type="SUPFAM" id="SSF56281">
    <property type="entry name" value="Metallo-hydrolase/oxidoreductase"/>
    <property type="match status" value="1"/>
</dbReference>
<keyword id="KW-0963">Cytoplasm</keyword>
<keyword id="KW-0378">Hydrolase</keyword>
<keyword id="KW-0479">Metal-binding</keyword>
<keyword id="KW-0539">Nucleus</keyword>
<keyword id="KW-1185">Reference proteome</keyword>
<keyword id="KW-0862">Zinc</keyword>